<keyword id="KW-0961">Cell wall biogenesis/degradation</keyword>
<keyword id="KW-0328">Glycosyltransferase</keyword>
<keyword id="KW-0333">Golgi apparatus</keyword>
<keyword id="KW-0472">Membrane</keyword>
<keyword id="KW-1185">Reference proteome</keyword>
<keyword id="KW-0808">Transferase</keyword>
<keyword id="KW-0812">Transmembrane</keyword>
<keyword id="KW-1133">Transmembrane helix</keyword>
<feature type="chain" id="PRO_0000319332" description="Probable glucomannan 4-beta-mannosyltransferase 11">
    <location>
        <begin position="1"/>
        <end position="443"/>
    </location>
</feature>
<feature type="transmembrane region" description="Helical" evidence="2">
    <location>
        <begin position="284"/>
        <end position="304"/>
    </location>
</feature>
<feature type="transmembrane region" description="Helical" evidence="2">
    <location>
        <begin position="321"/>
        <end position="341"/>
    </location>
</feature>
<feature type="transmembrane region" description="Helical" evidence="2">
    <location>
        <begin position="400"/>
        <end position="420"/>
    </location>
</feature>
<feature type="transmembrane region" description="Helical" evidence="2">
    <location>
        <begin position="421"/>
        <end position="441"/>
    </location>
</feature>
<feature type="active site" evidence="2">
    <location>
        <position position="52"/>
    </location>
</feature>
<feature type="active site" evidence="2">
    <location>
        <position position="205"/>
    </location>
</feature>
<feature type="binding site" evidence="2">
    <location>
        <position position="111"/>
    </location>
    <ligand>
        <name>substrate</name>
    </ligand>
</feature>
<feature type="binding site" evidence="2">
    <location>
        <position position="113"/>
    </location>
    <ligand>
        <name>substrate</name>
    </ligand>
</feature>
<evidence type="ECO:0000250" key="1">
    <source>
        <dbReference type="UniProtKB" id="Q9LZR3"/>
    </source>
</evidence>
<evidence type="ECO:0000255" key="2"/>
<evidence type="ECO:0000303" key="3">
    <source>
    </source>
</evidence>
<evidence type="ECO:0000305" key="4"/>
<comment type="function">
    <text evidence="1">Probable mannan synthase which consists of a 4-beta-mannosyltransferase activity on mannan using GDP-mannose. The beta-1,4-mannan product is the backbone for galactomannan synthesis by galactomannan galactosyltransferase. Galactomannan is a noncellulosic polysaccharides of plant cell wall.</text>
</comment>
<comment type="catalytic activity">
    <reaction evidence="1">
        <text>GDP-mannose + (glucomannan)n = GDP + (glucomannan)n+1.</text>
        <dbReference type="EC" id="2.4.1.32"/>
    </reaction>
</comment>
<comment type="subcellular location">
    <subcellularLocation>
        <location evidence="4">Golgi apparatus membrane</location>
        <topology evidence="4">Multi-pass membrane protein</topology>
    </subcellularLocation>
</comment>
<comment type="similarity">
    <text evidence="4">Belongs to the glycosyltransferase 2 family. Plant cellulose synthase-like A subfamily.</text>
</comment>
<comment type="sequence caution" evidence="4">
    <conflict type="erroneous gene model prediction">
        <sequence resource="EMBL-CDS" id="CAC01860"/>
    </conflict>
</comment>
<dbReference type="EC" id="2.4.1.32" evidence="1"/>
<dbReference type="EMBL" id="AL391148">
    <property type="protein sequence ID" value="CAC01860.1"/>
    <property type="status" value="ALT_SEQ"/>
    <property type="molecule type" value="Genomic_DNA"/>
</dbReference>
<dbReference type="EMBL" id="CP002688">
    <property type="protein sequence ID" value="AED92259.1"/>
    <property type="molecule type" value="Genomic_DNA"/>
</dbReference>
<dbReference type="EMBL" id="BT011957">
    <property type="status" value="NOT_ANNOTATED_CDS"/>
    <property type="molecule type" value="mRNA"/>
</dbReference>
<dbReference type="PIR" id="T51489">
    <property type="entry name" value="T51489"/>
</dbReference>
<dbReference type="RefSeq" id="NP_197123.3">
    <property type="nucleotide sequence ID" value="NM_121624.4"/>
</dbReference>
<dbReference type="SMR" id="Q9LF09"/>
<dbReference type="FunCoup" id="Q9LF09">
    <property type="interactions" value="9"/>
</dbReference>
<dbReference type="STRING" id="3702.Q9LF09"/>
<dbReference type="CAZy" id="GT2">
    <property type="family name" value="Glycosyltransferase Family 2"/>
</dbReference>
<dbReference type="PaxDb" id="3702-AT5G16190.1"/>
<dbReference type="ProteomicsDB" id="220356"/>
<dbReference type="EnsemblPlants" id="AT5G16190.1">
    <property type="protein sequence ID" value="AT5G16190.1"/>
    <property type="gene ID" value="AT5G16190"/>
</dbReference>
<dbReference type="GeneID" id="831477"/>
<dbReference type="Gramene" id="AT5G16190.1">
    <property type="protein sequence ID" value="AT5G16190.1"/>
    <property type="gene ID" value="AT5G16190"/>
</dbReference>
<dbReference type="KEGG" id="ath:AT5G16190"/>
<dbReference type="Araport" id="AT5G16190"/>
<dbReference type="TAIR" id="AT5G16190">
    <property type="gene designation" value="CSLA11"/>
</dbReference>
<dbReference type="eggNOG" id="ENOG502QR7J">
    <property type="taxonomic scope" value="Eukaryota"/>
</dbReference>
<dbReference type="HOGENOM" id="CLU_012856_2_0_1"/>
<dbReference type="InParanoid" id="Q9LF09"/>
<dbReference type="PhylomeDB" id="Q9LF09"/>
<dbReference type="PRO" id="PR:Q9LF09"/>
<dbReference type="Proteomes" id="UP000006548">
    <property type="component" value="Chromosome 5"/>
</dbReference>
<dbReference type="ExpressionAtlas" id="Q9LF09">
    <property type="expression patterns" value="baseline and differential"/>
</dbReference>
<dbReference type="GO" id="GO:0000139">
    <property type="term" value="C:Golgi membrane"/>
    <property type="evidence" value="ECO:0007669"/>
    <property type="project" value="UniProtKB-SubCell"/>
</dbReference>
<dbReference type="GO" id="GO:0047259">
    <property type="term" value="F:glucomannan 4-beta-mannosyltransferase activity"/>
    <property type="evidence" value="ECO:0007669"/>
    <property type="project" value="UniProtKB-EC"/>
</dbReference>
<dbReference type="GO" id="GO:0071555">
    <property type="term" value="P:cell wall organization"/>
    <property type="evidence" value="ECO:0007669"/>
    <property type="project" value="UniProtKB-KW"/>
</dbReference>
<dbReference type="CDD" id="cd06437">
    <property type="entry name" value="CESA_CaSu_A2"/>
    <property type="match status" value="1"/>
</dbReference>
<dbReference type="FunFam" id="3.90.550.10:FF:000015">
    <property type="entry name" value="Glucomannan 4-beta-mannosyltransferase 9"/>
    <property type="match status" value="1"/>
</dbReference>
<dbReference type="Gene3D" id="3.90.550.10">
    <property type="entry name" value="Spore Coat Polysaccharide Biosynthesis Protein SpsA, Chain A"/>
    <property type="match status" value="1"/>
</dbReference>
<dbReference type="InterPro" id="IPR001173">
    <property type="entry name" value="Glyco_trans_2-like"/>
</dbReference>
<dbReference type="InterPro" id="IPR029044">
    <property type="entry name" value="Nucleotide-diphossugar_trans"/>
</dbReference>
<dbReference type="PANTHER" id="PTHR32044:SF54">
    <property type="entry name" value="GLUCOMANNAN 4-BETA-MANNOSYLTRANSFERASE 11-RELATED"/>
    <property type="match status" value="1"/>
</dbReference>
<dbReference type="PANTHER" id="PTHR32044">
    <property type="entry name" value="GLUCOMANNAN 4-BETA-MANNOSYLTRANSFERASE 9"/>
    <property type="match status" value="1"/>
</dbReference>
<dbReference type="Pfam" id="PF13632">
    <property type="entry name" value="Glyco_trans_2_3"/>
    <property type="match status" value="1"/>
</dbReference>
<dbReference type="SUPFAM" id="SSF53448">
    <property type="entry name" value="Nucleotide-diphospho-sugar transferases"/>
    <property type="match status" value="1"/>
</dbReference>
<organism>
    <name type="scientific">Arabidopsis thaliana</name>
    <name type="common">Mouse-ear cress</name>
    <dbReference type="NCBI Taxonomy" id="3702"/>
    <lineage>
        <taxon>Eukaryota</taxon>
        <taxon>Viridiplantae</taxon>
        <taxon>Streptophyta</taxon>
        <taxon>Embryophyta</taxon>
        <taxon>Tracheophyta</taxon>
        <taxon>Spermatophyta</taxon>
        <taxon>Magnoliopsida</taxon>
        <taxon>eudicotyledons</taxon>
        <taxon>Gunneridae</taxon>
        <taxon>Pentapetalae</taxon>
        <taxon>rosids</taxon>
        <taxon>malvids</taxon>
        <taxon>Brassicales</taxon>
        <taxon>Brassicaceae</taxon>
        <taxon>Camelineae</taxon>
        <taxon>Arabidopsis</taxon>
    </lineage>
</organism>
<gene>
    <name evidence="3" type="primary">CSLA11</name>
    <name type="ordered locus">At5g16190</name>
    <name type="ORF">T21H19.110</name>
</gene>
<accession>Q9LF09</accession>
<name>CSLAB_ARATH</name>
<reference key="1">
    <citation type="journal article" date="2000" name="Nature">
        <title>Sequence and analysis of chromosome 5 of the plant Arabidopsis thaliana.</title>
        <authorList>
            <person name="Tabata S."/>
            <person name="Kaneko T."/>
            <person name="Nakamura Y."/>
            <person name="Kotani H."/>
            <person name="Kato T."/>
            <person name="Asamizu E."/>
            <person name="Miyajima N."/>
            <person name="Sasamoto S."/>
            <person name="Kimura T."/>
            <person name="Hosouchi T."/>
            <person name="Kawashima K."/>
            <person name="Kohara M."/>
            <person name="Matsumoto M."/>
            <person name="Matsuno A."/>
            <person name="Muraki A."/>
            <person name="Nakayama S."/>
            <person name="Nakazaki N."/>
            <person name="Naruo K."/>
            <person name="Okumura S."/>
            <person name="Shinpo S."/>
            <person name="Takeuchi C."/>
            <person name="Wada T."/>
            <person name="Watanabe A."/>
            <person name="Yamada M."/>
            <person name="Yasuda M."/>
            <person name="Sato S."/>
            <person name="de la Bastide M."/>
            <person name="Huang E."/>
            <person name="Spiegel L."/>
            <person name="Gnoj L."/>
            <person name="O'Shaughnessy A."/>
            <person name="Preston R."/>
            <person name="Habermann K."/>
            <person name="Murray J."/>
            <person name="Johnson D."/>
            <person name="Rohlfing T."/>
            <person name="Nelson J."/>
            <person name="Stoneking T."/>
            <person name="Pepin K."/>
            <person name="Spieth J."/>
            <person name="Sekhon M."/>
            <person name="Armstrong J."/>
            <person name="Becker M."/>
            <person name="Belter E."/>
            <person name="Cordum H."/>
            <person name="Cordes M."/>
            <person name="Courtney L."/>
            <person name="Courtney W."/>
            <person name="Dante M."/>
            <person name="Du H."/>
            <person name="Edwards J."/>
            <person name="Fryman J."/>
            <person name="Haakensen B."/>
            <person name="Lamar E."/>
            <person name="Latreille P."/>
            <person name="Leonard S."/>
            <person name="Meyer R."/>
            <person name="Mulvaney E."/>
            <person name="Ozersky P."/>
            <person name="Riley A."/>
            <person name="Strowmatt C."/>
            <person name="Wagner-McPherson C."/>
            <person name="Wollam A."/>
            <person name="Yoakum M."/>
            <person name="Bell M."/>
            <person name="Dedhia N."/>
            <person name="Parnell L."/>
            <person name="Shah R."/>
            <person name="Rodriguez M."/>
            <person name="Hoon See L."/>
            <person name="Vil D."/>
            <person name="Baker J."/>
            <person name="Kirchoff K."/>
            <person name="Toth K."/>
            <person name="King L."/>
            <person name="Bahret A."/>
            <person name="Miller B."/>
            <person name="Marra M.A."/>
            <person name="Martienssen R."/>
            <person name="McCombie W.R."/>
            <person name="Wilson R.K."/>
            <person name="Murphy G."/>
            <person name="Bancroft I."/>
            <person name="Volckaert G."/>
            <person name="Wambutt R."/>
            <person name="Duesterhoeft A."/>
            <person name="Stiekema W."/>
            <person name="Pohl T."/>
            <person name="Entian K.-D."/>
            <person name="Terryn N."/>
            <person name="Hartley N."/>
            <person name="Bent E."/>
            <person name="Johnson S."/>
            <person name="Langham S.-A."/>
            <person name="McCullagh B."/>
            <person name="Robben J."/>
            <person name="Grymonprez B."/>
            <person name="Zimmermann W."/>
            <person name="Ramsperger U."/>
            <person name="Wedler H."/>
            <person name="Balke K."/>
            <person name="Wedler E."/>
            <person name="Peters S."/>
            <person name="van Staveren M."/>
            <person name="Dirkse W."/>
            <person name="Mooijman P."/>
            <person name="Klein Lankhorst R."/>
            <person name="Weitzenegger T."/>
            <person name="Bothe G."/>
            <person name="Rose M."/>
            <person name="Hauf J."/>
            <person name="Berneiser S."/>
            <person name="Hempel S."/>
            <person name="Feldpausch M."/>
            <person name="Lamberth S."/>
            <person name="Villarroel R."/>
            <person name="Gielen J."/>
            <person name="Ardiles W."/>
            <person name="Bents O."/>
            <person name="Lemcke K."/>
            <person name="Kolesov G."/>
            <person name="Mayer K.F.X."/>
            <person name="Rudd S."/>
            <person name="Schoof H."/>
            <person name="Schueller C."/>
            <person name="Zaccaria P."/>
            <person name="Mewes H.-W."/>
            <person name="Bevan M."/>
            <person name="Fransz P.F."/>
        </authorList>
    </citation>
    <scope>NUCLEOTIDE SEQUENCE [LARGE SCALE GENOMIC DNA]</scope>
    <source>
        <strain>cv. Columbia</strain>
    </source>
</reference>
<reference key="2">
    <citation type="journal article" date="2017" name="Plant J.">
        <title>Araport11: a complete reannotation of the Arabidopsis thaliana reference genome.</title>
        <authorList>
            <person name="Cheng C.Y."/>
            <person name="Krishnakumar V."/>
            <person name="Chan A.P."/>
            <person name="Thibaud-Nissen F."/>
            <person name="Schobel S."/>
            <person name="Town C.D."/>
        </authorList>
    </citation>
    <scope>GENOME REANNOTATION</scope>
    <source>
        <strain>cv. Columbia</strain>
    </source>
</reference>
<reference key="3">
    <citation type="submission" date="2004-09" db="EMBL/GenBank/DDBJ databases">
        <authorList>
            <consortium name="Center for eukaryotic structural genomics (CESG)"/>
        </authorList>
    </citation>
    <scope>NUCLEOTIDE SEQUENCE [LARGE SCALE MRNA] OF 2-413</scope>
    <source>
        <strain>cv. Columbia</strain>
    </source>
</reference>
<reference key="4">
    <citation type="journal article" date="2000" name="Plant Physiol.">
        <title>The cellulose synthase superfamily.</title>
        <authorList>
            <person name="Richmond T.A."/>
            <person name="Somerville C.R."/>
        </authorList>
    </citation>
    <scope>GENE FAMILY</scope>
    <scope>NOMENCLATURE</scope>
</reference>
<sequence>MQEDLELGNQNFPMVLVQIPMYNEREVFKLSIGAACRLIWPLDRLIVQVLDDSTDPTIMEMVSTECGKWATKGINIKCERRDNRNGYKAGALKQGMRHSYVKTCTYIAIFDADFQPEPDYLERTVPFLIHNPELALVQARWKFVNAKKCLMTRMQEMSLNYHFTAEQESGSTRHAFFGFNGTAGVWRLAAMEEAGGWKDRTTVEDMDLAVRVGLHGWKFVFVNDVSVKSELPSQFKAFRFQQHRWSCGPANLFRKMTMEIIRNKRVTIWKKLYVIYSFFFVRKIIVHFFTFFFYCFILPTSVFFPEVNIPTWSTVYFPFMITLFNAIATPRSFYLVIFWVLFENVMAMHRTKGTFIGLLEGGRVNEWVVTEKLGDALETKLLPQVRKPRNGFLERINSKEMMVGIYILCCASYNLVFGKTVLYIYLYMQALAFIIAGIGFIGT</sequence>
<proteinExistence type="evidence at transcript level"/>
<protein>
    <recommendedName>
        <fullName evidence="4">Probable glucomannan 4-beta-mannosyltransferase 11</fullName>
        <ecNumber evidence="1">2.4.1.32</ecNumber>
    </recommendedName>
    <alternativeName>
        <fullName evidence="3">Cellulose synthase-like protein A11</fullName>
        <shortName evidence="3">AtCslA11</shortName>
    </alternativeName>
    <alternativeName>
        <fullName evidence="4">Glucomannan synthase</fullName>
    </alternativeName>
    <alternativeName>
        <fullName evidence="4">Mannan synthase 11</fullName>
    </alternativeName>
</protein>